<name>Y925_METM7</name>
<reference key="1">
    <citation type="submission" date="2007-06" db="EMBL/GenBank/DDBJ databases">
        <title>Complete sequence of Methanococcus maripaludis C7.</title>
        <authorList>
            <consortium name="US DOE Joint Genome Institute"/>
            <person name="Copeland A."/>
            <person name="Lucas S."/>
            <person name="Lapidus A."/>
            <person name="Barry K."/>
            <person name="Glavina del Rio T."/>
            <person name="Dalin E."/>
            <person name="Tice H."/>
            <person name="Pitluck S."/>
            <person name="Clum A."/>
            <person name="Schmutz J."/>
            <person name="Larimer F."/>
            <person name="Land M."/>
            <person name="Hauser L."/>
            <person name="Kyrpides N."/>
            <person name="Anderson I."/>
            <person name="Sieprawska-Lupa M."/>
            <person name="Whitman W.B."/>
            <person name="Richardson P."/>
        </authorList>
    </citation>
    <scope>NUCLEOTIDE SEQUENCE [LARGE SCALE GENOMIC DNA]</scope>
    <source>
        <strain>C7 / ATCC BAA-1331</strain>
    </source>
</reference>
<gene>
    <name type="ordered locus">MmarC7_0925</name>
</gene>
<accession>A6VHR6</accession>
<sequence length="344" mass="38236">MNKKSLNIVATLGILLVLAFSGCVDQSASDSTSEEKVLKIFHAGSLAVPFLEYETLYEDEYPNVDVQRESAGSVACVRKITELNKTAEILASADYTLIPDMMMPDYADWYVMVSKNEIVIAYTENSQYYDEITSDNWYEIFQRDGVKYGFSSPNDDPCGYRTQMVVQLAETAYGDSTIYDNLMLKNSNFMVDENADGTYLVRSPSTIDVNEDKVFMRSKEVDLLGPLETGAFDYLFIYKSVANQHNLSFIELPDEINLGNYANADDYATTSIILEGQNSTILAKPIVYGMTVPSNADDYEEGVSFTKMVLEHPEVFENSGQPAISPAIAIGNVPEELSDLVVMG</sequence>
<feature type="signal peptide" evidence="1">
    <location>
        <begin position="1"/>
        <end position="28"/>
    </location>
</feature>
<feature type="chain" id="PRO_0000334994" description="Uncharacterized solute-binding protein MmarC7_0925">
    <location>
        <begin position="29"/>
        <end position="344"/>
    </location>
</feature>
<organism>
    <name type="scientific">Methanococcus maripaludis (strain C7 / ATCC BAA-1331)</name>
    <dbReference type="NCBI Taxonomy" id="426368"/>
    <lineage>
        <taxon>Archaea</taxon>
        <taxon>Methanobacteriati</taxon>
        <taxon>Methanobacteriota</taxon>
        <taxon>Methanomada group</taxon>
        <taxon>Methanococci</taxon>
        <taxon>Methanococcales</taxon>
        <taxon>Methanococcaceae</taxon>
        <taxon>Methanococcus</taxon>
    </lineage>
</organism>
<keyword id="KW-0732">Signal</keyword>
<protein>
    <recommendedName>
        <fullName>Uncharacterized solute-binding protein MmarC7_0925</fullName>
    </recommendedName>
</protein>
<comment type="similarity">
    <text evidence="2">Belongs to the bacterial solute-binding protein 1 family. WtpA subfamily.</text>
</comment>
<proteinExistence type="inferred from homology"/>
<dbReference type="EMBL" id="CP000745">
    <property type="protein sequence ID" value="ABR65992.1"/>
    <property type="molecule type" value="Genomic_DNA"/>
</dbReference>
<dbReference type="SMR" id="A6VHR6"/>
<dbReference type="STRING" id="426368.MmarC7_0925"/>
<dbReference type="KEGG" id="mmz:MmarC7_0925"/>
<dbReference type="eggNOG" id="arCOG00219">
    <property type="taxonomic scope" value="Archaea"/>
</dbReference>
<dbReference type="HOGENOM" id="CLU_055936_0_0_2"/>
<dbReference type="OrthoDB" id="7820at2157"/>
<dbReference type="GO" id="GO:0030973">
    <property type="term" value="F:molybdate ion binding"/>
    <property type="evidence" value="ECO:0007669"/>
    <property type="project" value="TreeGrafter"/>
</dbReference>
<dbReference type="GO" id="GO:1901359">
    <property type="term" value="F:tungstate binding"/>
    <property type="evidence" value="ECO:0007669"/>
    <property type="project" value="InterPro"/>
</dbReference>
<dbReference type="GO" id="GO:0015689">
    <property type="term" value="P:molybdate ion transport"/>
    <property type="evidence" value="ECO:0007669"/>
    <property type="project" value="TreeGrafter"/>
</dbReference>
<dbReference type="CDD" id="cd13540">
    <property type="entry name" value="PBP2_ModA_WtpA"/>
    <property type="match status" value="1"/>
</dbReference>
<dbReference type="Gene3D" id="3.40.190.10">
    <property type="entry name" value="Periplasmic binding protein-like II"/>
    <property type="match status" value="2"/>
</dbReference>
<dbReference type="InterPro" id="IPR022498">
    <property type="entry name" value="ABC_trnspt_W-bd_WtpA"/>
</dbReference>
<dbReference type="InterPro" id="IPR050682">
    <property type="entry name" value="ModA/WtpA"/>
</dbReference>
<dbReference type="NCBIfam" id="NF003196">
    <property type="entry name" value="PRK04168.1"/>
    <property type="match status" value="1"/>
</dbReference>
<dbReference type="NCBIfam" id="TIGR03730">
    <property type="entry name" value="tungstate_WtpA"/>
    <property type="match status" value="1"/>
</dbReference>
<dbReference type="PANTHER" id="PTHR30632">
    <property type="entry name" value="MOLYBDATE-BINDING PERIPLASMIC PROTEIN"/>
    <property type="match status" value="1"/>
</dbReference>
<dbReference type="PANTHER" id="PTHR30632:SF16">
    <property type="entry name" value="MOLYBDATE_TUNGSTATE-BINDING PROTEIN WTPA"/>
    <property type="match status" value="1"/>
</dbReference>
<dbReference type="Pfam" id="PF13531">
    <property type="entry name" value="SBP_bac_11"/>
    <property type="match status" value="1"/>
</dbReference>
<dbReference type="SUPFAM" id="SSF53850">
    <property type="entry name" value="Periplasmic binding protein-like II"/>
    <property type="match status" value="1"/>
</dbReference>
<dbReference type="PROSITE" id="PS51257">
    <property type="entry name" value="PROKAR_LIPOPROTEIN"/>
    <property type="match status" value="1"/>
</dbReference>
<evidence type="ECO:0000255" key="1">
    <source>
        <dbReference type="PROSITE-ProRule" id="PRU00303"/>
    </source>
</evidence>
<evidence type="ECO:0000305" key="2"/>